<dbReference type="EMBL" id="CP001197">
    <property type="protein sequence ID" value="ACL07055.1"/>
    <property type="molecule type" value="Genomic_DNA"/>
</dbReference>
<dbReference type="SMR" id="B8DNB1"/>
<dbReference type="STRING" id="883.DvMF_0094"/>
<dbReference type="KEGG" id="dvm:DvMF_0094"/>
<dbReference type="eggNOG" id="COG0097">
    <property type="taxonomic scope" value="Bacteria"/>
</dbReference>
<dbReference type="HOGENOM" id="CLU_065464_1_2_7"/>
<dbReference type="OrthoDB" id="9805007at2"/>
<dbReference type="GO" id="GO:0022625">
    <property type="term" value="C:cytosolic large ribosomal subunit"/>
    <property type="evidence" value="ECO:0007669"/>
    <property type="project" value="TreeGrafter"/>
</dbReference>
<dbReference type="GO" id="GO:0019843">
    <property type="term" value="F:rRNA binding"/>
    <property type="evidence" value="ECO:0007669"/>
    <property type="project" value="UniProtKB-UniRule"/>
</dbReference>
<dbReference type="GO" id="GO:0003735">
    <property type="term" value="F:structural constituent of ribosome"/>
    <property type="evidence" value="ECO:0007669"/>
    <property type="project" value="InterPro"/>
</dbReference>
<dbReference type="GO" id="GO:0002181">
    <property type="term" value="P:cytoplasmic translation"/>
    <property type="evidence" value="ECO:0007669"/>
    <property type="project" value="TreeGrafter"/>
</dbReference>
<dbReference type="FunFam" id="3.90.930.12:FF:000001">
    <property type="entry name" value="50S ribosomal protein L6"/>
    <property type="match status" value="1"/>
</dbReference>
<dbReference type="FunFam" id="3.90.930.12:FF:000002">
    <property type="entry name" value="50S ribosomal protein L6"/>
    <property type="match status" value="1"/>
</dbReference>
<dbReference type="Gene3D" id="3.90.930.12">
    <property type="entry name" value="Ribosomal protein L6, alpha-beta domain"/>
    <property type="match status" value="2"/>
</dbReference>
<dbReference type="HAMAP" id="MF_01365_B">
    <property type="entry name" value="Ribosomal_uL6_B"/>
    <property type="match status" value="1"/>
</dbReference>
<dbReference type="InterPro" id="IPR000702">
    <property type="entry name" value="Ribosomal_uL6-like"/>
</dbReference>
<dbReference type="InterPro" id="IPR036789">
    <property type="entry name" value="Ribosomal_uL6-like_a/b-dom_sf"/>
</dbReference>
<dbReference type="InterPro" id="IPR020040">
    <property type="entry name" value="Ribosomal_uL6_a/b-dom"/>
</dbReference>
<dbReference type="InterPro" id="IPR019906">
    <property type="entry name" value="Ribosomal_uL6_bac-type"/>
</dbReference>
<dbReference type="InterPro" id="IPR002358">
    <property type="entry name" value="Ribosomal_uL6_CS"/>
</dbReference>
<dbReference type="NCBIfam" id="TIGR03654">
    <property type="entry name" value="L6_bact"/>
    <property type="match status" value="1"/>
</dbReference>
<dbReference type="PANTHER" id="PTHR11655">
    <property type="entry name" value="60S/50S RIBOSOMAL PROTEIN L6/L9"/>
    <property type="match status" value="1"/>
</dbReference>
<dbReference type="PANTHER" id="PTHR11655:SF14">
    <property type="entry name" value="LARGE RIBOSOMAL SUBUNIT PROTEIN UL6M"/>
    <property type="match status" value="1"/>
</dbReference>
<dbReference type="Pfam" id="PF00347">
    <property type="entry name" value="Ribosomal_L6"/>
    <property type="match status" value="2"/>
</dbReference>
<dbReference type="PIRSF" id="PIRSF002162">
    <property type="entry name" value="Ribosomal_L6"/>
    <property type="match status" value="1"/>
</dbReference>
<dbReference type="PRINTS" id="PR00059">
    <property type="entry name" value="RIBOSOMALL6"/>
</dbReference>
<dbReference type="SUPFAM" id="SSF56053">
    <property type="entry name" value="Ribosomal protein L6"/>
    <property type="match status" value="2"/>
</dbReference>
<dbReference type="PROSITE" id="PS00525">
    <property type="entry name" value="RIBOSOMAL_L6_1"/>
    <property type="match status" value="1"/>
</dbReference>
<name>RL6_NITV9</name>
<comment type="function">
    <text evidence="1">This protein binds to the 23S rRNA, and is important in its secondary structure. It is located near the subunit interface in the base of the L7/L12 stalk, and near the tRNA binding site of the peptidyltransferase center.</text>
</comment>
<comment type="subunit">
    <text evidence="1">Part of the 50S ribosomal subunit.</text>
</comment>
<comment type="similarity">
    <text evidence="1">Belongs to the universal ribosomal protein uL6 family.</text>
</comment>
<keyword id="KW-0687">Ribonucleoprotein</keyword>
<keyword id="KW-0689">Ribosomal protein</keyword>
<keyword id="KW-0694">RNA-binding</keyword>
<keyword id="KW-0699">rRNA-binding</keyword>
<protein>
    <recommendedName>
        <fullName evidence="1">Large ribosomal subunit protein uL6</fullName>
    </recommendedName>
    <alternativeName>
        <fullName evidence="3">50S ribosomal protein L6</fullName>
    </alternativeName>
</protein>
<sequence>MSRIGKLPIAIPSGVEVKVGTEAVEVKGPKGVLVTPTHTELNYAVEDGHVVITRATETRTARAQHGLRRTLLANCIQGVTKGFSKTLEVIGVGYKVAVKGNLVELAVGFSHPVIMEMPEGVEAKVEGQKLTISGTSKEVVGEIAARIRRVRKPEPYKGKGIKYDNEQIRRKAGKSGGK</sequence>
<reference key="1">
    <citation type="submission" date="2008-10" db="EMBL/GenBank/DDBJ databases">
        <title>Complete sequence of Desulfovibrio vulgaris str. 'Miyazaki F'.</title>
        <authorList>
            <person name="Lucas S."/>
            <person name="Copeland A."/>
            <person name="Lapidus A."/>
            <person name="Glavina del Rio T."/>
            <person name="Dalin E."/>
            <person name="Tice H."/>
            <person name="Bruce D."/>
            <person name="Goodwin L."/>
            <person name="Pitluck S."/>
            <person name="Sims D."/>
            <person name="Brettin T."/>
            <person name="Detter J.C."/>
            <person name="Han C."/>
            <person name="Larimer F."/>
            <person name="Land M."/>
            <person name="Hauser L."/>
            <person name="Kyrpides N."/>
            <person name="Mikhailova N."/>
            <person name="Hazen T.C."/>
            <person name="Richardson P."/>
        </authorList>
    </citation>
    <scope>NUCLEOTIDE SEQUENCE [LARGE SCALE GENOMIC DNA]</scope>
    <source>
        <strain>DSM 19637 / Miyazaki F</strain>
    </source>
</reference>
<feature type="chain" id="PRO_1000143978" description="Large ribosomal subunit protein uL6">
    <location>
        <begin position="1"/>
        <end position="178"/>
    </location>
</feature>
<feature type="region of interest" description="Disordered" evidence="2">
    <location>
        <begin position="155"/>
        <end position="178"/>
    </location>
</feature>
<feature type="compositionally biased region" description="Basic and acidic residues" evidence="2">
    <location>
        <begin position="155"/>
        <end position="169"/>
    </location>
</feature>
<accession>B8DNB1</accession>
<proteinExistence type="inferred from homology"/>
<organism>
    <name type="scientific">Nitratidesulfovibrio vulgaris (strain DSM 19637 / Miyazaki F)</name>
    <name type="common">Desulfovibrio vulgaris</name>
    <dbReference type="NCBI Taxonomy" id="883"/>
    <lineage>
        <taxon>Bacteria</taxon>
        <taxon>Pseudomonadati</taxon>
        <taxon>Thermodesulfobacteriota</taxon>
        <taxon>Desulfovibrionia</taxon>
        <taxon>Desulfovibrionales</taxon>
        <taxon>Desulfovibrionaceae</taxon>
        <taxon>Nitratidesulfovibrio</taxon>
    </lineage>
</organism>
<gene>
    <name evidence="1" type="primary">rplF</name>
    <name type="ordered locus">DvMF_0094</name>
</gene>
<evidence type="ECO:0000255" key="1">
    <source>
        <dbReference type="HAMAP-Rule" id="MF_01365"/>
    </source>
</evidence>
<evidence type="ECO:0000256" key="2">
    <source>
        <dbReference type="SAM" id="MobiDB-lite"/>
    </source>
</evidence>
<evidence type="ECO:0000305" key="3"/>